<evidence type="ECO:0000255" key="1">
    <source>
        <dbReference type="HAMAP-Rule" id="MF_01261"/>
    </source>
</evidence>
<gene>
    <name evidence="1" type="primary">cca</name>
    <name type="ordered locus">SG3100</name>
</gene>
<accession>B5REG2</accession>
<protein>
    <recommendedName>
        <fullName evidence="1">Multifunctional CCA protein</fullName>
    </recommendedName>
    <domain>
        <recommendedName>
            <fullName evidence="1">CCA-adding enzyme</fullName>
            <ecNumber evidence="1">2.7.7.72</ecNumber>
        </recommendedName>
        <alternativeName>
            <fullName evidence="1">CCA tRNA nucleotidyltransferase</fullName>
        </alternativeName>
        <alternativeName>
            <fullName evidence="1">tRNA CCA-pyrophosphorylase</fullName>
        </alternativeName>
        <alternativeName>
            <fullName evidence="1">tRNA adenylyl-/cytidylyl-transferase</fullName>
        </alternativeName>
        <alternativeName>
            <fullName evidence="1">tRNA nucleotidyltransferase</fullName>
        </alternativeName>
        <alternativeName>
            <fullName evidence="1">tRNA-NT</fullName>
        </alternativeName>
    </domain>
    <domain>
        <recommendedName>
            <fullName evidence="1">2'-nucleotidase</fullName>
            <ecNumber evidence="1">3.1.3.-</ecNumber>
        </recommendedName>
    </domain>
    <domain>
        <recommendedName>
            <fullName evidence="1">2',3'-cyclic phosphodiesterase</fullName>
            <ecNumber evidence="1">3.1.4.-</ecNumber>
        </recommendedName>
    </domain>
    <domain>
        <recommendedName>
            <fullName evidence="1">Phosphatase</fullName>
            <ecNumber evidence="1">3.1.3.-</ecNumber>
        </recommendedName>
    </domain>
</protein>
<organism>
    <name type="scientific">Salmonella gallinarum (strain 287/91 / NCTC 13346)</name>
    <dbReference type="NCBI Taxonomy" id="550538"/>
    <lineage>
        <taxon>Bacteria</taxon>
        <taxon>Pseudomonadati</taxon>
        <taxon>Pseudomonadota</taxon>
        <taxon>Gammaproteobacteria</taxon>
        <taxon>Enterobacterales</taxon>
        <taxon>Enterobacteriaceae</taxon>
        <taxon>Salmonella</taxon>
    </lineage>
</organism>
<keyword id="KW-0067">ATP-binding</keyword>
<keyword id="KW-0378">Hydrolase</keyword>
<keyword id="KW-0460">Magnesium</keyword>
<keyword id="KW-0479">Metal-binding</keyword>
<keyword id="KW-0511">Multifunctional enzyme</keyword>
<keyword id="KW-0533">Nickel</keyword>
<keyword id="KW-0547">Nucleotide-binding</keyword>
<keyword id="KW-0548">Nucleotidyltransferase</keyword>
<keyword id="KW-0692">RNA repair</keyword>
<keyword id="KW-0694">RNA-binding</keyword>
<keyword id="KW-0808">Transferase</keyword>
<keyword id="KW-0819">tRNA processing</keyword>
<comment type="function">
    <text evidence="1">Catalyzes the addition and repair of the essential 3'-terminal CCA sequence in tRNAs without using a nucleic acid template. Adds these three nucleotides in the order of C, C, and A to the tRNA nucleotide-73, using CTP and ATP as substrates and producing inorganic pyrophosphate. tRNA 3'-terminal CCA addition is required both for tRNA processing and repair. Also involved in tRNA surveillance by mediating tandem CCA addition to generate a CCACCA at the 3' terminus of unstable tRNAs. While stable tRNAs receive only 3'-terminal CCA, unstable tRNAs are marked with CCACCA and rapidly degraded.</text>
</comment>
<comment type="catalytic activity">
    <reaction evidence="1">
        <text>a tRNA precursor + 2 CTP + ATP = a tRNA with a 3' CCA end + 3 diphosphate</text>
        <dbReference type="Rhea" id="RHEA:14433"/>
        <dbReference type="Rhea" id="RHEA-COMP:10465"/>
        <dbReference type="Rhea" id="RHEA-COMP:10468"/>
        <dbReference type="ChEBI" id="CHEBI:30616"/>
        <dbReference type="ChEBI" id="CHEBI:33019"/>
        <dbReference type="ChEBI" id="CHEBI:37563"/>
        <dbReference type="ChEBI" id="CHEBI:74896"/>
        <dbReference type="ChEBI" id="CHEBI:83071"/>
        <dbReference type="EC" id="2.7.7.72"/>
    </reaction>
</comment>
<comment type="catalytic activity">
    <reaction evidence="1">
        <text>a tRNA with a 3' CCA end + 2 CTP + ATP = a tRNA with a 3' CCACCA end + 3 diphosphate</text>
        <dbReference type="Rhea" id="RHEA:76235"/>
        <dbReference type="Rhea" id="RHEA-COMP:10468"/>
        <dbReference type="Rhea" id="RHEA-COMP:18655"/>
        <dbReference type="ChEBI" id="CHEBI:30616"/>
        <dbReference type="ChEBI" id="CHEBI:33019"/>
        <dbReference type="ChEBI" id="CHEBI:37563"/>
        <dbReference type="ChEBI" id="CHEBI:83071"/>
        <dbReference type="ChEBI" id="CHEBI:195187"/>
    </reaction>
    <physiologicalReaction direction="left-to-right" evidence="1">
        <dbReference type="Rhea" id="RHEA:76236"/>
    </physiologicalReaction>
</comment>
<comment type="cofactor">
    <cofactor evidence="1">
        <name>Mg(2+)</name>
        <dbReference type="ChEBI" id="CHEBI:18420"/>
    </cofactor>
    <text evidence="1">Magnesium is required for nucleotidyltransferase activity.</text>
</comment>
<comment type="cofactor">
    <cofactor evidence="1">
        <name>Ni(2+)</name>
        <dbReference type="ChEBI" id="CHEBI:49786"/>
    </cofactor>
    <text evidence="1">Nickel for phosphatase activity.</text>
</comment>
<comment type="subunit">
    <text evidence="1">Monomer. Can also form homodimers and oligomers.</text>
</comment>
<comment type="domain">
    <text evidence="1">Comprises two domains: an N-terminal domain containing the nucleotidyltransferase activity and a C-terminal HD domain associated with both phosphodiesterase and phosphatase activities.</text>
</comment>
<comment type="miscellaneous">
    <text evidence="1">A single active site specifically recognizes both ATP and CTP and is responsible for their addition.</text>
</comment>
<comment type="similarity">
    <text evidence="1">Belongs to the tRNA nucleotidyltransferase/poly(A) polymerase family. Bacterial CCA-adding enzyme type 1 subfamily.</text>
</comment>
<reference key="1">
    <citation type="journal article" date="2008" name="Genome Res.">
        <title>Comparative genome analysis of Salmonella enteritidis PT4 and Salmonella gallinarum 287/91 provides insights into evolutionary and host adaptation pathways.</title>
        <authorList>
            <person name="Thomson N.R."/>
            <person name="Clayton D.J."/>
            <person name="Windhorst D."/>
            <person name="Vernikos G."/>
            <person name="Davidson S."/>
            <person name="Churcher C."/>
            <person name="Quail M.A."/>
            <person name="Stevens M."/>
            <person name="Jones M.A."/>
            <person name="Watson M."/>
            <person name="Barron A."/>
            <person name="Layton A."/>
            <person name="Pickard D."/>
            <person name="Kingsley R.A."/>
            <person name="Bignell A."/>
            <person name="Clark L."/>
            <person name="Harris B."/>
            <person name="Ormond D."/>
            <person name="Abdellah Z."/>
            <person name="Brooks K."/>
            <person name="Cherevach I."/>
            <person name="Chillingworth T."/>
            <person name="Woodward J."/>
            <person name="Norberczak H."/>
            <person name="Lord A."/>
            <person name="Arrowsmith C."/>
            <person name="Jagels K."/>
            <person name="Moule S."/>
            <person name="Mungall K."/>
            <person name="Saunders M."/>
            <person name="Whitehead S."/>
            <person name="Chabalgoity J.A."/>
            <person name="Maskell D."/>
            <person name="Humphreys T."/>
            <person name="Roberts M."/>
            <person name="Barrow P.A."/>
            <person name="Dougan G."/>
            <person name="Parkhill J."/>
        </authorList>
    </citation>
    <scope>NUCLEOTIDE SEQUENCE [LARGE SCALE GENOMIC DNA]</scope>
    <source>
        <strain>287/91 / NCTC 13346</strain>
    </source>
</reference>
<sequence length="413" mass="46576">MKIYLVGGAVRDALLGLPVKDKDWVVVGATPQEMLDAGYQQVGRDFPVFLHPQTHEEYALARTERKSGSGYTGFTCYAAPDVTLEADLQRRDLTINALARDDDGQIIDPYHGRRDLEARLLRHVSPAFGEDPLRVLRVARFAARYAHLSFRIADETLALMREMTAAGELEHLTPERVWKETENALTTRNPQVYFQVLRDCGALRVLFPEIDALFGVPAPAKWHPEIDTGVHTLMTLSMAAMLSPQLDVRFATLCHDLGKGLTPKNLWPRHHGHGPAGVKLVEQLCQRLRVPNDLRDLAKLVAEYHDLIHTFPILQPKTIVKLFDAIDAWRKPQRVEQIALTSEADVRGRTGFEASDYPQGRWLREAWQVAQAVPTKEVVEAGFKGIEIREELTKRRIAAVANWKEKRCPNPAS</sequence>
<feature type="chain" id="PRO_1000140048" description="Multifunctional CCA protein">
    <location>
        <begin position="1"/>
        <end position="413"/>
    </location>
</feature>
<feature type="domain" description="HD" evidence="1">
    <location>
        <begin position="228"/>
        <end position="329"/>
    </location>
</feature>
<feature type="binding site" evidence="1">
    <location>
        <position position="8"/>
    </location>
    <ligand>
        <name>ATP</name>
        <dbReference type="ChEBI" id="CHEBI:30616"/>
    </ligand>
</feature>
<feature type="binding site" evidence="1">
    <location>
        <position position="8"/>
    </location>
    <ligand>
        <name>CTP</name>
        <dbReference type="ChEBI" id="CHEBI:37563"/>
    </ligand>
</feature>
<feature type="binding site" evidence="1">
    <location>
        <position position="11"/>
    </location>
    <ligand>
        <name>ATP</name>
        <dbReference type="ChEBI" id="CHEBI:30616"/>
    </ligand>
</feature>
<feature type="binding site" evidence="1">
    <location>
        <position position="11"/>
    </location>
    <ligand>
        <name>CTP</name>
        <dbReference type="ChEBI" id="CHEBI:37563"/>
    </ligand>
</feature>
<feature type="binding site" evidence="1">
    <location>
        <position position="21"/>
    </location>
    <ligand>
        <name>Mg(2+)</name>
        <dbReference type="ChEBI" id="CHEBI:18420"/>
    </ligand>
</feature>
<feature type="binding site" evidence="1">
    <location>
        <position position="23"/>
    </location>
    <ligand>
        <name>Mg(2+)</name>
        <dbReference type="ChEBI" id="CHEBI:18420"/>
    </ligand>
</feature>
<feature type="binding site" evidence="1">
    <location>
        <position position="91"/>
    </location>
    <ligand>
        <name>ATP</name>
        <dbReference type="ChEBI" id="CHEBI:30616"/>
    </ligand>
</feature>
<feature type="binding site" evidence="1">
    <location>
        <position position="91"/>
    </location>
    <ligand>
        <name>CTP</name>
        <dbReference type="ChEBI" id="CHEBI:37563"/>
    </ligand>
</feature>
<feature type="binding site" evidence="1">
    <location>
        <position position="137"/>
    </location>
    <ligand>
        <name>ATP</name>
        <dbReference type="ChEBI" id="CHEBI:30616"/>
    </ligand>
</feature>
<feature type="binding site" evidence="1">
    <location>
        <position position="137"/>
    </location>
    <ligand>
        <name>CTP</name>
        <dbReference type="ChEBI" id="CHEBI:37563"/>
    </ligand>
</feature>
<feature type="binding site" evidence="1">
    <location>
        <position position="140"/>
    </location>
    <ligand>
        <name>ATP</name>
        <dbReference type="ChEBI" id="CHEBI:30616"/>
    </ligand>
</feature>
<feature type="binding site" evidence="1">
    <location>
        <position position="140"/>
    </location>
    <ligand>
        <name>CTP</name>
        <dbReference type="ChEBI" id="CHEBI:37563"/>
    </ligand>
</feature>
<name>CCA_SALG2</name>
<dbReference type="EC" id="2.7.7.72" evidence="1"/>
<dbReference type="EC" id="3.1.3.-" evidence="1"/>
<dbReference type="EC" id="3.1.4.-" evidence="1"/>
<dbReference type="EMBL" id="AM933173">
    <property type="protein sequence ID" value="CAR38901.1"/>
    <property type="molecule type" value="Genomic_DNA"/>
</dbReference>
<dbReference type="RefSeq" id="WP_000708447.1">
    <property type="nucleotide sequence ID" value="NC_011274.1"/>
</dbReference>
<dbReference type="SMR" id="B5REG2"/>
<dbReference type="KEGG" id="seg:SG3100"/>
<dbReference type="HOGENOM" id="CLU_015961_1_1_6"/>
<dbReference type="Proteomes" id="UP000008321">
    <property type="component" value="Chromosome"/>
</dbReference>
<dbReference type="GO" id="GO:0005524">
    <property type="term" value="F:ATP binding"/>
    <property type="evidence" value="ECO:0007669"/>
    <property type="project" value="UniProtKB-UniRule"/>
</dbReference>
<dbReference type="GO" id="GO:0004810">
    <property type="term" value="F:CCA tRNA nucleotidyltransferase activity"/>
    <property type="evidence" value="ECO:0007669"/>
    <property type="project" value="UniProtKB-UniRule"/>
</dbReference>
<dbReference type="GO" id="GO:0004112">
    <property type="term" value="F:cyclic-nucleotide phosphodiesterase activity"/>
    <property type="evidence" value="ECO:0007669"/>
    <property type="project" value="UniProtKB-UniRule"/>
</dbReference>
<dbReference type="GO" id="GO:0000287">
    <property type="term" value="F:magnesium ion binding"/>
    <property type="evidence" value="ECO:0007669"/>
    <property type="project" value="UniProtKB-UniRule"/>
</dbReference>
<dbReference type="GO" id="GO:0016791">
    <property type="term" value="F:phosphatase activity"/>
    <property type="evidence" value="ECO:0007669"/>
    <property type="project" value="UniProtKB-UniRule"/>
</dbReference>
<dbReference type="GO" id="GO:0000049">
    <property type="term" value="F:tRNA binding"/>
    <property type="evidence" value="ECO:0007669"/>
    <property type="project" value="UniProtKB-UniRule"/>
</dbReference>
<dbReference type="GO" id="GO:0042245">
    <property type="term" value="P:RNA repair"/>
    <property type="evidence" value="ECO:0007669"/>
    <property type="project" value="UniProtKB-KW"/>
</dbReference>
<dbReference type="GO" id="GO:0001680">
    <property type="term" value="P:tRNA 3'-terminal CCA addition"/>
    <property type="evidence" value="ECO:0007669"/>
    <property type="project" value="UniProtKB-UniRule"/>
</dbReference>
<dbReference type="CDD" id="cd00077">
    <property type="entry name" value="HDc"/>
    <property type="match status" value="1"/>
</dbReference>
<dbReference type="CDD" id="cd05398">
    <property type="entry name" value="NT_ClassII-CCAase"/>
    <property type="match status" value="1"/>
</dbReference>
<dbReference type="FunFam" id="1.10.3090.10:FF:000001">
    <property type="entry name" value="Multifunctional CCA protein"/>
    <property type="match status" value="1"/>
</dbReference>
<dbReference type="FunFam" id="3.30.460.10:FF:000016">
    <property type="entry name" value="Multifunctional CCA protein"/>
    <property type="match status" value="1"/>
</dbReference>
<dbReference type="Gene3D" id="3.30.460.10">
    <property type="entry name" value="Beta Polymerase, domain 2"/>
    <property type="match status" value="1"/>
</dbReference>
<dbReference type="Gene3D" id="1.10.3090.10">
    <property type="entry name" value="cca-adding enzyme, domain 2"/>
    <property type="match status" value="1"/>
</dbReference>
<dbReference type="HAMAP" id="MF_01261">
    <property type="entry name" value="CCA_bact_type1"/>
    <property type="match status" value="1"/>
</dbReference>
<dbReference type="HAMAP" id="MF_01262">
    <property type="entry name" value="CCA_bact_type2"/>
    <property type="match status" value="1"/>
</dbReference>
<dbReference type="InterPro" id="IPR012006">
    <property type="entry name" value="CCA_bact"/>
</dbReference>
<dbReference type="InterPro" id="IPR003607">
    <property type="entry name" value="HD/PDEase_dom"/>
</dbReference>
<dbReference type="InterPro" id="IPR006674">
    <property type="entry name" value="HD_domain"/>
</dbReference>
<dbReference type="InterPro" id="IPR043519">
    <property type="entry name" value="NT_sf"/>
</dbReference>
<dbReference type="InterPro" id="IPR002646">
    <property type="entry name" value="PolA_pol_head_dom"/>
</dbReference>
<dbReference type="InterPro" id="IPR032828">
    <property type="entry name" value="PolyA_RNA-bd"/>
</dbReference>
<dbReference type="InterPro" id="IPR050124">
    <property type="entry name" value="tRNA_CCA-adding_enzyme"/>
</dbReference>
<dbReference type="NCBIfam" id="NF008137">
    <property type="entry name" value="PRK10885.1"/>
    <property type="match status" value="1"/>
</dbReference>
<dbReference type="PANTHER" id="PTHR47545">
    <property type="entry name" value="MULTIFUNCTIONAL CCA PROTEIN"/>
    <property type="match status" value="1"/>
</dbReference>
<dbReference type="PANTHER" id="PTHR47545:SF1">
    <property type="entry name" value="MULTIFUNCTIONAL CCA PROTEIN"/>
    <property type="match status" value="1"/>
</dbReference>
<dbReference type="Pfam" id="PF01966">
    <property type="entry name" value="HD"/>
    <property type="match status" value="1"/>
</dbReference>
<dbReference type="Pfam" id="PF01743">
    <property type="entry name" value="PolyA_pol"/>
    <property type="match status" value="1"/>
</dbReference>
<dbReference type="Pfam" id="PF12627">
    <property type="entry name" value="PolyA_pol_RNAbd"/>
    <property type="match status" value="1"/>
</dbReference>
<dbReference type="PIRSF" id="PIRSF000813">
    <property type="entry name" value="CCA_bact"/>
    <property type="match status" value="1"/>
</dbReference>
<dbReference type="SMART" id="SM00471">
    <property type="entry name" value="HDc"/>
    <property type="match status" value="1"/>
</dbReference>
<dbReference type="SUPFAM" id="SSF81301">
    <property type="entry name" value="Nucleotidyltransferase"/>
    <property type="match status" value="1"/>
</dbReference>
<dbReference type="SUPFAM" id="SSF81891">
    <property type="entry name" value="Poly A polymerase C-terminal region-like"/>
    <property type="match status" value="1"/>
</dbReference>
<dbReference type="PROSITE" id="PS51831">
    <property type="entry name" value="HD"/>
    <property type="match status" value="1"/>
</dbReference>
<proteinExistence type="inferred from homology"/>